<feature type="chain" id="PRO_0000224073" description="DNA-directed RNA polymerase subunit beta">
    <location>
        <begin position="1"/>
        <end position="1358"/>
    </location>
</feature>
<keyword id="KW-0240">DNA-directed RNA polymerase</keyword>
<keyword id="KW-0548">Nucleotidyltransferase</keyword>
<keyword id="KW-1185">Reference proteome</keyword>
<keyword id="KW-0804">Transcription</keyword>
<keyword id="KW-0808">Transferase</keyword>
<proteinExistence type="inferred from homology"/>
<name>RPOB_METCA</name>
<comment type="function">
    <text evidence="1">DNA-dependent RNA polymerase catalyzes the transcription of DNA into RNA using the four ribonucleoside triphosphates as substrates.</text>
</comment>
<comment type="catalytic activity">
    <reaction evidence="1">
        <text>RNA(n) + a ribonucleoside 5'-triphosphate = RNA(n+1) + diphosphate</text>
        <dbReference type="Rhea" id="RHEA:21248"/>
        <dbReference type="Rhea" id="RHEA-COMP:14527"/>
        <dbReference type="Rhea" id="RHEA-COMP:17342"/>
        <dbReference type="ChEBI" id="CHEBI:33019"/>
        <dbReference type="ChEBI" id="CHEBI:61557"/>
        <dbReference type="ChEBI" id="CHEBI:140395"/>
        <dbReference type="EC" id="2.7.7.6"/>
    </reaction>
</comment>
<comment type="subunit">
    <text evidence="1">The RNAP catalytic core consists of 2 alpha, 1 beta, 1 beta' and 1 omega subunit. When a sigma factor is associated with the core the holoenzyme is formed, which can initiate transcription.</text>
</comment>
<comment type="similarity">
    <text evidence="1">Belongs to the RNA polymerase beta chain family.</text>
</comment>
<evidence type="ECO:0000255" key="1">
    <source>
        <dbReference type="HAMAP-Rule" id="MF_01321"/>
    </source>
</evidence>
<gene>
    <name evidence="1" type="primary">rpoB</name>
    <name type="ordered locus">MCA1066</name>
</gene>
<protein>
    <recommendedName>
        <fullName evidence="1">DNA-directed RNA polymerase subunit beta</fullName>
        <shortName evidence="1">RNAP subunit beta</shortName>
        <ecNumber evidence="1">2.7.7.6</ecNumber>
    </recommendedName>
    <alternativeName>
        <fullName evidence="1">RNA polymerase subunit beta</fullName>
    </alternativeName>
    <alternativeName>
        <fullName evidence="1">Transcriptase subunit beta</fullName>
    </alternativeName>
</protein>
<dbReference type="EC" id="2.7.7.6" evidence="1"/>
<dbReference type="EMBL" id="AE017282">
    <property type="protein sequence ID" value="AAU92668.1"/>
    <property type="molecule type" value="Genomic_DNA"/>
</dbReference>
<dbReference type="RefSeq" id="WP_010960366.1">
    <property type="nucleotide sequence ID" value="NC_002977.6"/>
</dbReference>
<dbReference type="SMR" id="Q60A06"/>
<dbReference type="STRING" id="243233.MCA1066"/>
<dbReference type="GeneID" id="88223363"/>
<dbReference type="KEGG" id="mca:MCA1066"/>
<dbReference type="eggNOG" id="COG0085">
    <property type="taxonomic scope" value="Bacteria"/>
</dbReference>
<dbReference type="HOGENOM" id="CLU_000524_4_3_6"/>
<dbReference type="Proteomes" id="UP000006821">
    <property type="component" value="Chromosome"/>
</dbReference>
<dbReference type="GO" id="GO:0000428">
    <property type="term" value="C:DNA-directed RNA polymerase complex"/>
    <property type="evidence" value="ECO:0007669"/>
    <property type="project" value="UniProtKB-KW"/>
</dbReference>
<dbReference type="GO" id="GO:0003677">
    <property type="term" value="F:DNA binding"/>
    <property type="evidence" value="ECO:0007669"/>
    <property type="project" value="UniProtKB-UniRule"/>
</dbReference>
<dbReference type="GO" id="GO:0003899">
    <property type="term" value="F:DNA-directed RNA polymerase activity"/>
    <property type="evidence" value="ECO:0007669"/>
    <property type="project" value="UniProtKB-UniRule"/>
</dbReference>
<dbReference type="GO" id="GO:0032549">
    <property type="term" value="F:ribonucleoside binding"/>
    <property type="evidence" value="ECO:0007669"/>
    <property type="project" value="InterPro"/>
</dbReference>
<dbReference type="GO" id="GO:0006351">
    <property type="term" value="P:DNA-templated transcription"/>
    <property type="evidence" value="ECO:0007669"/>
    <property type="project" value="UniProtKB-UniRule"/>
</dbReference>
<dbReference type="CDD" id="cd00653">
    <property type="entry name" value="RNA_pol_B_RPB2"/>
    <property type="match status" value="1"/>
</dbReference>
<dbReference type="FunFam" id="2.40.50.100:FF:000006">
    <property type="entry name" value="DNA-directed RNA polymerase subunit beta"/>
    <property type="match status" value="1"/>
</dbReference>
<dbReference type="FunFam" id="2.40.50.150:FF:000001">
    <property type="entry name" value="DNA-directed RNA polymerase subunit beta"/>
    <property type="match status" value="1"/>
</dbReference>
<dbReference type="FunFam" id="3.90.1800.10:FF:000001">
    <property type="entry name" value="DNA-directed RNA polymerase subunit beta"/>
    <property type="match status" value="1"/>
</dbReference>
<dbReference type="Gene3D" id="2.40.50.100">
    <property type="match status" value="1"/>
</dbReference>
<dbReference type="Gene3D" id="2.40.50.150">
    <property type="match status" value="1"/>
</dbReference>
<dbReference type="Gene3D" id="3.90.1100.10">
    <property type="match status" value="2"/>
</dbReference>
<dbReference type="Gene3D" id="6.10.140.1670">
    <property type="match status" value="1"/>
</dbReference>
<dbReference type="Gene3D" id="2.30.150.10">
    <property type="entry name" value="DNA-directed RNA polymerase, beta subunit, external 1 domain"/>
    <property type="match status" value="1"/>
</dbReference>
<dbReference type="Gene3D" id="2.40.270.10">
    <property type="entry name" value="DNA-directed RNA polymerase, subunit 2, domain 6"/>
    <property type="match status" value="1"/>
</dbReference>
<dbReference type="Gene3D" id="3.90.1800.10">
    <property type="entry name" value="RNA polymerase alpha subunit dimerisation domain"/>
    <property type="match status" value="1"/>
</dbReference>
<dbReference type="Gene3D" id="3.90.1110.10">
    <property type="entry name" value="RNA polymerase Rpb2, domain 2"/>
    <property type="match status" value="1"/>
</dbReference>
<dbReference type="HAMAP" id="MF_01321">
    <property type="entry name" value="RNApol_bact_RpoB"/>
    <property type="match status" value="1"/>
</dbReference>
<dbReference type="InterPro" id="IPR042107">
    <property type="entry name" value="DNA-dir_RNA_pol_bsu_ext_1_sf"/>
</dbReference>
<dbReference type="InterPro" id="IPR019462">
    <property type="entry name" value="DNA-dir_RNA_pol_bsu_external_1"/>
</dbReference>
<dbReference type="InterPro" id="IPR015712">
    <property type="entry name" value="DNA-dir_RNA_pol_su2"/>
</dbReference>
<dbReference type="InterPro" id="IPR007120">
    <property type="entry name" value="DNA-dir_RNAP_su2_dom"/>
</dbReference>
<dbReference type="InterPro" id="IPR037033">
    <property type="entry name" value="DNA-dir_RNAP_su2_hyb_sf"/>
</dbReference>
<dbReference type="InterPro" id="IPR010243">
    <property type="entry name" value="RNA_pol_bsu_bac"/>
</dbReference>
<dbReference type="InterPro" id="IPR007121">
    <property type="entry name" value="RNA_pol_bsu_CS"/>
</dbReference>
<dbReference type="InterPro" id="IPR007644">
    <property type="entry name" value="RNA_pol_bsu_protrusion"/>
</dbReference>
<dbReference type="InterPro" id="IPR007642">
    <property type="entry name" value="RNA_pol_Rpb2_2"/>
</dbReference>
<dbReference type="InterPro" id="IPR037034">
    <property type="entry name" value="RNA_pol_Rpb2_2_sf"/>
</dbReference>
<dbReference type="InterPro" id="IPR007645">
    <property type="entry name" value="RNA_pol_Rpb2_3"/>
</dbReference>
<dbReference type="InterPro" id="IPR007641">
    <property type="entry name" value="RNA_pol_Rpb2_7"/>
</dbReference>
<dbReference type="InterPro" id="IPR014724">
    <property type="entry name" value="RNA_pol_RPB2_OB-fold"/>
</dbReference>
<dbReference type="NCBIfam" id="NF001616">
    <property type="entry name" value="PRK00405.1"/>
    <property type="match status" value="1"/>
</dbReference>
<dbReference type="NCBIfam" id="TIGR02013">
    <property type="entry name" value="rpoB"/>
    <property type="match status" value="1"/>
</dbReference>
<dbReference type="PANTHER" id="PTHR20856">
    <property type="entry name" value="DNA-DIRECTED RNA POLYMERASE I SUBUNIT 2"/>
    <property type="match status" value="1"/>
</dbReference>
<dbReference type="Pfam" id="PF04563">
    <property type="entry name" value="RNA_pol_Rpb2_1"/>
    <property type="match status" value="1"/>
</dbReference>
<dbReference type="Pfam" id="PF04561">
    <property type="entry name" value="RNA_pol_Rpb2_2"/>
    <property type="match status" value="2"/>
</dbReference>
<dbReference type="Pfam" id="PF04565">
    <property type="entry name" value="RNA_pol_Rpb2_3"/>
    <property type="match status" value="1"/>
</dbReference>
<dbReference type="Pfam" id="PF10385">
    <property type="entry name" value="RNA_pol_Rpb2_45"/>
    <property type="match status" value="1"/>
</dbReference>
<dbReference type="Pfam" id="PF00562">
    <property type="entry name" value="RNA_pol_Rpb2_6"/>
    <property type="match status" value="1"/>
</dbReference>
<dbReference type="Pfam" id="PF04560">
    <property type="entry name" value="RNA_pol_Rpb2_7"/>
    <property type="match status" value="1"/>
</dbReference>
<dbReference type="SUPFAM" id="SSF64484">
    <property type="entry name" value="beta and beta-prime subunits of DNA dependent RNA-polymerase"/>
    <property type="match status" value="1"/>
</dbReference>
<dbReference type="PROSITE" id="PS01166">
    <property type="entry name" value="RNA_POL_BETA"/>
    <property type="match status" value="1"/>
</dbReference>
<sequence length="1358" mass="151759">MAYSFTEKKRIRKSFGKRQDVLEVPYLLATQVDSYRRFLQLDKQPAARSDEGLHAALKSVFPIKSHSGNIVLEYVSYRLGDPVFDVKECQQRGTTYAAPLRVLVRLVVYDKDAPVGAKVVRDIKEQEIYMGEIPLMTDNGTFVINGTERVIVSQLHRSPGVFFDHDRGKTHSSGKLLFNARIIPYRGSWLDFEFDHKDCVYVRIDRRRKLPATVLLRALGYDNEQIIAEFFDTNRFLLSSAGIQLELIPERLRGDIASFDIRLGDQIVVEKDHRITARHIRMLQKENVNLLDVPKDYLYGKILAHNVVDTSTGELIAKVNQEITEDVYARLVAAAIPEIRTLYVNDLDRGPYISNTMRIDLTETQLDALVEIYRMMRPGEPPTKEAAQTLFENLFFSAERYDLSAVGRMKFNRRLGRTDPTGPGVLENDDIIAVLKELINIRNGGGTVDDIDHLGNRRVRSVGEMVENQFRLGLVRVERAVKERLSLPDADGLMPQEIINAKPVAASIKEFFGSSQLSQFMDQNNPLSEVTHKRRVSALGPGGLARERAGFEVRDVHTTHYGRVCPIETPEGPNIGLINSLAVYSRTNEYGFLETPYRKVIDGRVTDQIEYLSAIEEGQYYIAQASASVDENGMLKDELVSCRHKDEFTLASRENINYMDVSSKQIVSVAASLIPFLEHDDANRALMGSNMQRQAVPTLRTEKPLVGTGMERIVARDSGVAVVAKRGGTVEFVDASRIVVRVNDEETEAGVPGVDIYNLTKYTRSNQNTCINQRPLVKPGDVVARNDVLADGPSTDMGELALGQNLLVAFMPWNGYNFEDSILISERVVQDDRFTTIHIEEKTCVARDTKLGPEEITADIPNVGEAALSKLDESGIVYIGAEVKAGDILVGKVTPKGETQLTPEEKLLRAIFGEKASDVKDTSLRVPSGMDGTVIDVQVFTRDGVKKDERARQIEEAEIERVRKDLNDQLRIIEKDFYQRAEQMVLGKVADMGPGGLKRGATITREYLDSIKPAQWLEIRLQDEDVNLQIEAIAEQIAQQREEIAKRLEEKRRKITMGDDLAPGVLKMVKVYLAVKRRIQPGDKMAGRHGNKGVISRIVPVEDMPYSADGTPVDIVLNPLGVPSRMNVGQVLETHLGWAAKGVGLKIGRMLEAKAKIEEIRSFLTQVYNVSGRQEDIASLSDAEVLELAGNLQDGVPMATPVFDGATEEDIKAMLRLADLPESGQATLFDGRTGDVFDRPVTVGYMYMLKLNHLVDDKMHARSTGPYSLVTQQPLGGKAQFGGQRFGEMEVWALEAYGAAYTLQEMLTVKSDDVNGRTKMYKNIVDGDHRMEAAMPESFNVLIKEIRSLGINIELEQD</sequence>
<organism>
    <name type="scientific">Methylococcus capsulatus (strain ATCC 33009 / NCIMB 11132 / Bath)</name>
    <dbReference type="NCBI Taxonomy" id="243233"/>
    <lineage>
        <taxon>Bacteria</taxon>
        <taxon>Pseudomonadati</taxon>
        <taxon>Pseudomonadota</taxon>
        <taxon>Gammaproteobacteria</taxon>
        <taxon>Methylococcales</taxon>
        <taxon>Methylococcaceae</taxon>
        <taxon>Methylococcus</taxon>
    </lineage>
</organism>
<reference key="1">
    <citation type="journal article" date="2004" name="PLoS Biol.">
        <title>Genomic insights into methanotrophy: the complete genome sequence of Methylococcus capsulatus (Bath).</title>
        <authorList>
            <person name="Ward N.L."/>
            <person name="Larsen O."/>
            <person name="Sakwa J."/>
            <person name="Bruseth L."/>
            <person name="Khouri H.M."/>
            <person name="Durkin A.S."/>
            <person name="Dimitrov G."/>
            <person name="Jiang L."/>
            <person name="Scanlan D."/>
            <person name="Kang K.H."/>
            <person name="Lewis M.R."/>
            <person name="Nelson K.E."/>
            <person name="Methe B.A."/>
            <person name="Wu M."/>
            <person name="Heidelberg J.F."/>
            <person name="Paulsen I.T."/>
            <person name="Fouts D.E."/>
            <person name="Ravel J."/>
            <person name="Tettelin H."/>
            <person name="Ren Q."/>
            <person name="Read T.D."/>
            <person name="DeBoy R.T."/>
            <person name="Seshadri R."/>
            <person name="Salzberg S.L."/>
            <person name="Jensen H.B."/>
            <person name="Birkeland N.K."/>
            <person name="Nelson W.C."/>
            <person name="Dodson R.J."/>
            <person name="Grindhaug S.H."/>
            <person name="Holt I.E."/>
            <person name="Eidhammer I."/>
            <person name="Jonasen I."/>
            <person name="Vanaken S."/>
            <person name="Utterback T.R."/>
            <person name="Feldblyum T.V."/>
            <person name="Fraser C.M."/>
            <person name="Lillehaug J.R."/>
            <person name="Eisen J.A."/>
        </authorList>
    </citation>
    <scope>NUCLEOTIDE SEQUENCE [LARGE SCALE GENOMIC DNA]</scope>
    <source>
        <strain>ATCC 33009 / NCIMB 11132 / Bath</strain>
    </source>
</reference>
<accession>Q60A06</accession>